<dbReference type="EMBL" id="CP001215">
    <property type="protein sequence ID" value="ACP13634.1"/>
    <property type="molecule type" value="Genomic_DNA"/>
</dbReference>
<dbReference type="RefSeq" id="WP_000376225.1">
    <property type="nucleotide sequence ID" value="NC_012581.1"/>
</dbReference>
<dbReference type="SMR" id="C3LIS2"/>
<dbReference type="GeneID" id="45023946"/>
<dbReference type="KEGG" id="bah:BAMEG_4317"/>
<dbReference type="HOGENOM" id="CLU_045647_5_3_9"/>
<dbReference type="GO" id="GO:0005737">
    <property type="term" value="C:cytoplasm"/>
    <property type="evidence" value="ECO:0007669"/>
    <property type="project" value="UniProtKB-SubCell"/>
</dbReference>
<dbReference type="GO" id="GO:0051301">
    <property type="term" value="P:cell division"/>
    <property type="evidence" value="ECO:0007669"/>
    <property type="project" value="UniProtKB-KW"/>
</dbReference>
<dbReference type="GO" id="GO:0051304">
    <property type="term" value="P:chromosome separation"/>
    <property type="evidence" value="ECO:0007669"/>
    <property type="project" value="InterPro"/>
</dbReference>
<dbReference type="GO" id="GO:0006260">
    <property type="term" value="P:DNA replication"/>
    <property type="evidence" value="ECO:0007669"/>
    <property type="project" value="UniProtKB-UniRule"/>
</dbReference>
<dbReference type="Gene3D" id="1.10.10.10">
    <property type="entry name" value="Winged helix-like DNA-binding domain superfamily/Winged helix DNA-binding domain"/>
    <property type="match status" value="2"/>
</dbReference>
<dbReference type="HAMAP" id="MF_01804">
    <property type="entry name" value="ScpB"/>
    <property type="match status" value="1"/>
</dbReference>
<dbReference type="InterPro" id="IPR005234">
    <property type="entry name" value="ScpB_csome_segregation"/>
</dbReference>
<dbReference type="InterPro" id="IPR036388">
    <property type="entry name" value="WH-like_DNA-bd_sf"/>
</dbReference>
<dbReference type="InterPro" id="IPR036390">
    <property type="entry name" value="WH_DNA-bd_sf"/>
</dbReference>
<dbReference type="NCBIfam" id="TIGR00281">
    <property type="entry name" value="SMC-Scp complex subunit ScpB"/>
    <property type="match status" value="1"/>
</dbReference>
<dbReference type="PANTHER" id="PTHR34298">
    <property type="entry name" value="SEGREGATION AND CONDENSATION PROTEIN B"/>
    <property type="match status" value="1"/>
</dbReference>
<dbReference type="PANTHER" id="PTHR34298:SF2">
    <property type="entry name" value="SEGREGATION AND CONDENSATION PROTEIN B"/>
    <property type="match status" value="1"/>
</dbReference>
<dbReference type="Pfam" id="PF04079">
    <property type="entry name" value="SMC_ScpB"/>
    <property type="match status" value="1"/>
</dbReference>
<dbReference type="PIRSF" id="PIRSF019345">
    <property type="entry name" value="ScpB"/>
    <property type="match status" value="1"/>
</dbReference>
<dbReference type="SUPFAM" id="SSF46785">
    <property type="entry name" value="Winged helix' DNA-binding domain"/>
    <property type="match status" value="2"/>
</dbReference>
<gene>
    <name evidence="1" type="primary">scpB</name>
    <name type="ordered locus">BAMEG_4317</name>
</gene>
<keyword id="KW-0131">Cell cycle</keyword>
<keyword id="KW-0132">Cell division</keyword>
<keyword id="KW-0159">Chromosome partition</keyword>
<keyword id="KW-0963">Cytoplasm</keyword>
<proteinExistence type="inferred from homology"/>
<feature type="chain" id="PRO_1000187525" description="Segregation and condensation protein B">
    <location>
        <begin position="1"/>
        <end position="190"/>
    </location>
</feature>
<evidence type="ECO:0000255" key="1">
    <source>
        <dbReference type="HAMAP-Rule" id="MF_01804"/>
    </source>
</evidence>
<sequence>MDRTEQKSIIEGLLFVSGDEGIYPEQIAKVLEIEGNEVIDILEEMQKECEGAHRGLQIVQYAKVYRFATKKEHASYYQKLIEIPTAASLSQAALETLAIVAYRQPITRTEMEEIRGVKTDKALQTLVSHLLIKEMGRAEGPGRPILYGTTKEFLDTFGLKTLDDLPPLSEENEQMNEADLFFGSLQEISK</sequence>
<accession>C3LIS2</accession>
<organism>
    <name type="scientific">Bacillus anthracis (strain CDC 684 / NRRL 3495)</name>
    <dbReference type="NCBI Taxonomy" id="568206"/>
    <lineage>
        <taxon>Bacteria</taxon>
        <taxon>Bacillati</taxon>
        <taxon>Bacillota</taxon>
        <taxon>Bacilli</taxon>
        <taxon>Bacillales</taxon>
        <taxon>Bacillaceae</taxon>
        <taxon>Bacillus</taxon>
        <taxon>Bacillus cereus group</taxon>
    </lineage>
</organism>
<comment type="function">
    <text evidence="1">Participates in chromosomal partition during cell division. May act via the formation of a condensin-like complex containing Smc and ScpA that pull DNA away from mid-cell into both cell halves.</text>
</comment>
<comment type="subunit">
    <text evidence="1">Homodimer. Homodimerization may be required to stabilize the binding of ScpA to the Smc head domains. Component of a cohesin-like complex composed of ScpA, ScpB and the Smc homodimer, in which ScpA and ScpB bind to the head domain of Smc. The presence of the three proteins is required for the association of the complex with DNA.</text>
</comment>
<comment type="subcellular location">
    <subcellularLocation>
        <location evidence="1">Cytoplasm</location>
    </subcellularLocation>
    <text evidence="1">Associated with two foci at the outer edges of the nucleoid region in young cells, and at four foci within both cell halves in older cells.</text>
</comment>
<comment type="similarity">
    <text evidence="1">Belongs to the ScpB family.</text>
</comment>
<reference key="1">
    <citation type="submission" date="2008-10" db="EMBL/GenBank/DDBJ databases">
        <title>Genome sequence of Bacillus anthracis str. CDC 684.</title>
        <authorList>
            <person name="Dodson R.J."/>
            <person name="Munk A.C."/>
            <person name="Brettin T."/>
            <person name="Bruce D."/>
            <person name="Detter C."/>
            <person name="Tapia R."/>
            <person name="Han C."/>
            <person name="Sutton G."/>
            <person name="Sims D."/>
        </authorList>
    </citation>
    <scope>NUCLEOTIDE SEQUENCE [LARGE SCALE GENOMIC DNA]</scope>
    <source>
        <strain>CDC 684 / NRRL 3495</strain>
    </source>
</reference>
<name>SCPB_BACAC</name>
<protein>
    <recommendedName>
        <fullName evidence="1">Segregation and condensation protein B</fullName>
    </recommendedName>
</protein>